<accession>Q9EQP5</accession>
<proteinExistence type="evidence at transcript level"/>
<feature type="signal peptide" evidence="4">
    <location>
        <begin position="1"/>
        <end position="21"/>
    </location>
</feature>
<feature type="chain" id="PRO_0000032746" description="Prolargin">
    <location>
        <begin position="22"/>
        <end position="377"/>
    </location>
</feature>
<feature type="repeat" description="LRR 1">
    <location>
        <begin position="90"/>
        <end position="109"/>
    </location>
</feature>
<feature type="repeat" description="LRR 2">
    <location>
        <begin position="110"/>
        <end position="133"/>
    </location>
</feature>
<feature type="repeat" description="LRR 3">
    <location>
        <begin position="134"/>
        <end position="157"/>
    </location>
</feature>
<feature type="repeat" description="LRR 4">
    <location>
        <begin position="158"/>
        <end position="178"/>
    </location>
</feature>
<feature type="repeat" description="LRR 5">
    <location>
        <begin position="179"/>
        <end position="202"/>
    </location>
</feature>
<feature type="repeat" description="LRR 6">
    <location>
        <begin position="203"/>
        <end position="228"/>
    </location>
</feature>
<feature type="repeat" description="LRR 7">
    <location>
        <begin position="229"/>
        <end position="249"/>
    </location>
</feature>
<feature type="repeat" description="LRR 8">
    <location>
        <begin position="250"/>
        <end position="273"/>
    </location>
</feature>
<feature type="repeat" description="LRR 9">
    <location>
        <begin position="274"/>
        <end position="298"/>
    </location>
</feature>
<feature type="repeat" description="LRR 10">
    <location>
        <begin position="299"/>
        <end position="318"/>
    </location>
</feature>
<feature type="repeat" description="LRR 11">
    <location>
        <begin position="319"/>
        <end position="357"/>
    </location>
</feature>
<feature type="repeat" description="LRR 12">
    <location>
        <begin position="358"/>
        <end position="377"/>
    </location>
</feature>
<feature type="region of interest" description="Disordered" evidence="5">
    <location>
        <begin position="22"/>
        <end position="61"/>
    </location>
</feature>
<feature type="compositionally biased region" description="Pro residues" evidence="5">
    <location>
        <begin position="36"/>
        <end position="45"/>
    </location>
</feature>
<feature type="compositionally biased region" description="Pro residues" evidence="5">
    <location>
        <begin position="52"/>
        <end position="61"/>
    </location>
</feature>
<feature type="glycosylation site" description="N-linked (GlcNAc...) asparagine" evidence="4">
    <location>
        <position position="119"/>
    </location>
</feature>
<feature type="glycosylation site" description="N-linked (GlcNAc...) asparagine" evidence="4">
    <location>
        <position position="284"/>
    </location>
</feature>
<feature type="glycosylation site" description="N-linked (GlcNAc...) asparagine" evidence="4">
    <location>
        <position position="315"/>
    </location>
</feature>
<feature type="glycosylation site" description="N-linked (GlcNAc...) asparagine" evidence="4">
    <location>
        <position position="322"/>
    </location>
</feature>
<feature type="disulfide bond" evidence="1">
    <location>
        <begin position="327"/>
        <end position="368"/>
    </location>
</feature>
<protein>
    <recommendedName>
        <fullName>Prolargin</fullName>
    </recommendedName>
    <alternativeName>
        <fullName>Proline-arginine-rich end leucine-rich repeat protein</fullName>
    </alternativeName>
</protein>
<evidence type="ECO:0000250" key="1"/>
<evidence type="ECO:0000250" key="2">
    <source>
        <dbReference type="UniProtKB" id="P51888"/>
    </source>
</evidence>
<evidence type="ECO:0000250" key="3">
    <source>
        <dbReference type="UniProtKB" id="Q9GKN8"/>
    </source>
</evidence>
<evidence type="ECO:0000255" key="4"/>
<evidence type="ECO:0000256" key="5">
    <source>
        <dbReference type="SAM" id="MobiDB-lite"/>
    </source>
</evidence>
<evidence type="ECO:0000305" key="6"/>
<sequence>MRASFFWFLPLLLILASVAQGQPRPKPGIRRKPKPRPTPSFPQPHEPAEPTDLPPPLPPGPPSVFPDCPRECYCPPDFPSALYCDSRNLRKVPIIPPRIHYLYLQNNFITELPVESFKNATGLRWINLDNNRIRKVDQRVLEKLPGLAFLYMDKNQLEEVPSALPRNLEQLRLSQNLISRIPPGVFSKLENLLLLDLQHNRLSDGVFKADTFQGLKNLMQLNLAHNILRRMPPKVPPAIHQLYLDSNKIETIPSGYFKDFPNLAFIRMNYNKLSDRGLPKNSFNISNLLVLHLSHNKISNVPAISNKLEHLYLNNNSIEKINGTQICPSNLVAFHDFSSDLENVPHLRYLRLDGNFLKPPIPLDLMMCFRLLQSVVI</sequence>
<comment type="function">
    <text evidence="3">May anchor basement membranes to the underlying connective tissue.</text>
</comment>
<comment type="subunit">
    <text evidence="3">Binds the basement membrane heparan sulfate proteoglycan perlecan and triple helical collagens type I and type II.</text>
</comment>
<comment type="subcellular location">
    <subcellularLocation>
        <location>Secreted</location>
        <location>Extracellular space</location>
        <location>Extracellular matrix</location>
    </subcellularLocation>
</comment>
<comment type="domain">
    <text evidence="2 3">The basic N-terminal Arg/Pro-rich region binds heparin and heparan sulfate. Binds collagens type I and type II through its leucine-rich repeat domain.</text>
</comment>
<comment type="PTM">
    <text evidence="3">Glycosylated; contains heparan sulfate.</text>
</comment>
<comment type="similarity">
    <text evidence="6">Belongs to the small leucine-rich proteoglycan (SLRP) family. SLRP class II subfamily.</text>
</comment>
<gene>
    <name type="primary">Prelp</name>
</gene>
<keyword id="KW-1015">Disulfide bond</keyword>
<keyword id="KW-0272">Extracellular matrix</keyword>
<keyword id="KW-0325">Glycoprotein</keyword>
<keyword id="KW-0357">Heparan sulfate</keyword>
<keyword id="KW-0358">Heparin-binding</keyword>
<keyword id="KW-0433">Leucine-rich repeat</keyword>
<keyword id="KW-0654">Proteoglycan</keyword>
<keyword id="KW-1185">Reference proteome</keyword>
<keyword id="KW-0677">Repeat</keyword>
<keyword id="KW-0964">Secreted</keyword>
<keyword id="KW-0732">Signal</keyword>
<name>PRELP_RAT</name>
<dbReference type="EMBL" id="AF163569">
    <property type="protein sequence ID" value="AAG23724.1"/>
    <property type="molecule type" value="mRNA"/>
</dbReference>
<dbReference type="EMBL" id="BC072487">
    <property type="protein sequence ID" value="AAH72487.1"/>
    <property type="molecule type" value="mRNA"/>
</dbReference>
<dbReference type="RefSeq" id="NP_445837.1">
    <property type="nucleotide sequence ID" value="NM_053385.1"/>
</dbReference>
<dbReference type="RefSeq" id="XP_006249953.1">
    <property type="nucleotide sequence ID" value="XM_006249891.5"/>
</dbReference>
<dbReference type="RefSeq" id="XP_008767794.1">
    <property type="nucleotide sequence ID" value="XM_008769572.3"/>
</dbReference>
<dbReference type="SMR" id="Q9EQP5"/>
<dbReference type="FunCoup" id="Q9EQP5">
    <property type="interactions" value="69"/>
</dbReference>
<dbReference type="STRING" id="10116.ENSRNOP00000004241"/>
<dbReference type="GlyCosmos" id="Q9EQP5">
    <property type="glycosylation" value="4 sites, No reported glycans"/>
</dbReference>
<dbReference type="GlyGen" id="Q9EQP5">
    <property type="glycosylation" value="5 sites"/>
</dbReference>
<dbReference type="iPTMnet" id="Q9EQP5"/>
<dbReference type="PhosphoSitePlus" id="Q9EQP5"/>
<dbReference type="SwissPalm" id="Q9EQP5"/>
<dbReference type="PaxDb" id="10116-ENSRNOP00000004241"/>
<dbReference type="Ensembl" id="ENSRNOT00000004241.5">
    <property type="protein sequence ID" value="ENSRNOP00000004241.2"/>
    <property type="gene ID" value="ENSRNOG00000003120.6"/>
</dbReference>
<dbReference type="GeneID" id="84400"/>
<dbReference type="KEGG" id="rno:84400"/>
<dbReference type="UCSC" id="RGD:620226">
    <property type="organism name" value="rat"/>
</dbReference>
<dbReference type="AGR" id="RGD:620226"/>
<dbReference type="CTD" id="5549"/>
<dbReference type="RGD" id="620226">
    <property type="gene designation" value="Prelp"/>
</dbReference>
<dbReference type="eggNOG" id="KOG0619">
    <property type="taxonomic scope" value="Eukaryota"/>
</dbReference>
<dbReference type="GeneTree" id="ENSGT00940000160163"/>
<dbReference type="InParanoid" id="Q9EQP5"/>
<dbReference type="OMA" id="ELRWVNL"/>
<dbReference type="OrthoDB" id="5789657at2759"/>
<dbReference type="PhylomeDB" id="Q9EQP5"/>
<dbReference type="TreeFam" id="TF334562"/>
<dbReference type="Reactome" id="R-RNO-2022854">
    <property type="pathway name" value="Keratan sulfate biosynthesis"/>
</dbReference>
<dbReference type="Reactome" id="R-RNO-2022857">
    <property type="pathway name" value="Keratan sulfate degradation"/>
</dbReference>
<dbReference type="PRO" id="PR:Q9EQP5"/>
<dbReference type="Proteomes" id="UP000002494">
    <property type="component" value="Chromosome 13"/>
</dbReference>
<dbReference type="Bgee" id="ENSRNOG00000003120">
    <property type="expression patterns" value="Expressed in lung and 19 other cell types or tissues"/>
</dbReference>
<dbReference type="GO" id="GO:0005615">
    <property type="term" value="C:extracellular space"/>
    <property type="evidence" value="ECO:0000318"/>
    <property type="project" value="GO_Central"/>
</dbReference>
<dbReference type="GO" id="GO:0008201">
    <property type="term" value="F:heparin binding"/>
    <property type="evidence" value="ECO:0000314"/>
    <property type="project" value="RGD"/>
</dbReference>
<dbReference type="GO" id="GO:0090398">
    <property type="term" value="P:cellular senescence"/>
    <property type="evidence" value="ECO:0000266"/>
    <property type="project" value="RGD"/>
</dbReference>
<dbReference type="FunFam" id="3.80.10.10:FF:000092">
    <property type="entry name" value="keratocan isoform X1"/>
    <property type="match status" value="1"/>
</dbReference>
<dbReference type="FunFam" id="3.80.10.10:FF:000133">
    <property type="entry name" value="prolargin"/>
    <property type="match status" value="1"/>
</dbReference>
<dbReference type="Gene3D" id="3.80.10.10">
    <property type="entry name" value="Ribonuclease Inhibitor"/>
    <property type="match status" value="2"/>
</dbReference>
<dbReference type="InterPro" id="IPR001611">
    <property type="entry name" value="Leu-rich_rpt"/>
</dbReference>
<dbReference type="InterPro" id="IPR003591">
    <property type="entry name" value="Leu-rich_rpt_typical-subtyp"/>
</dbReference>
<dbReference type="InterPro" id="IPR032675">
    <property type="entry name" value="LRR_dom_sf"/>
</dbReference>
<dbReference type="InterPro" id="IPR000372">
    <property type="entry name" value="LRRNT"/>
</dbReference>
<dbReference type="InterPro" id="IPR050333">
    <property type="entry name" value="SLRP"/>
</dbReference>
<dbReference type="PANTHER" id="PTHR45712">
    <property type="entry name" value="AGAP008170-PA"/>
    <property type="match status" value="1"/>
</dbReference>
<dbReference type="PANTHER" id="PTHR45712:SF8">
    <property type="entry name" value="PROLARGIN"/>
    <property type="match status" value="1"/>
</dbReference>
<dbReference type="Pfam" id="PF13855">
    <property type="entry name" value="LRR_8"/>
    <property type="match status" value="2"/>
</dbReference>
<dbReference type="Pfam" id="PF01462">
    <property type="entry name" value="LRRNT"/>
    <property type="match status" value="1"/>
</dbReference>
<dbReference type="SMART" id="SM00364">
    <property type="entry name" value="LRR_BAC"/>
    <property type="match status" value="5"/>
</dbReference>
<dbReference type="SMART" id="SM00369">
    <property type="entry name" value="LRR_TYP"/>
    <property type="match status" value="8"/>
</dbReference>
<dbReference type="SMART" id="SM00013">
    <property type="entry name" value="LRRNT"/>
    <property type="match status" value="1"/>
</dbReference>
<dbReference type="SUPFAM" id="SSF52058">
    <property type="entry name" value="L domain-like"/>
    <property type="match status" value="1"/>
</dbReference>
<dbReference type="PROSITE" id="PS51450">
    <property type="entry name" value="LRR"/>
    <property type="match status" value="10"/>
</dbReference>
<organism>
    <name type="scientific">Rattus norvegicus</name>
    <name type="common">Rat</name>
    <dbReference type="NCBI Taxonomy" id="10116"/>
    <lineage>
        <taxon>Eukaryota</taxon>
        <taxon>Metazoa</taxon>
        <taxon>Chordata</taxon>
        <taxon>Craniata</taxon>
        <taxon>Vertebrata</taxon>
        <taxon>Euteleostomi</taxon>
        <taxon>Mammalia</taxon>
        <taxon>Eutheria</taxon>
        <taxon>Euarchontoglires</taxon>
        <taxon>Glires</taxon>
        <taxon>Rodentia</taxon>
        <taxon>Myomorpha</taxon>
        <taxon>Muroidea</taxon>
        <taxon>Muridae</taxon>
        <taxon>Murinae</taxon>
        <taxon>Rattus</taxon>
    </lineage>
</organism>
<reference key="1">
    <citation type="journal article" date="2000" name="J. Biol. Chem.">
        <title>The amino-terminal part of PRELP binds to heparin and heparan sulfate.</title>
        <authorList>
            <person name="Bengtsson E."/>
            <person name="Aspberg A."/>
            <person name="Heinegaard D."/>
            <person name="Sommarin Y."/>
            <person name="Spillmann D."/>
        </authorList>
    </citation>
    <scope>NUCLEOTIDE SEQUENCE [MRNA]</scope>
    <source>
        <tissue>Chondrosarcoma</tissue>
    </source>
</reference>
<reference key="2">
    <citation type="journal article" date="2004" name="Genome Res.">
        <title>The status, quality, and expansion of the NIH full-length cDNA project: the Mammalian Gene Collection (MGC).</title>
        <authorList>
            <consortium name="The MGC Project Team"/>
        </authorList>
    </citation>
    <scope>NUCLEOTIDE SEQUENCE [LARGE SCALE MRNA]</scope>
    <source>
        <tissue>Heart</tissue>
    </source>
</reference>